<proteinExistence type="inferred from homology"/>
<accession>Q9ZD90</accession>
<reference key="1">
    <citation type="journal article" date="1998" name="Nature">
        <title>The genome sequence of Rickettsia prowazekii and the origin of mitochondria.</title>
        <authorList>
            <person name="Andersson S.G.E."/>
            <person name="Zomorodipour A."/>
            <person name="Andersson J.O."/>
            <person name="Sicheritz-Ponten T."/>
            <person name="Alsmark U.C.M."/>
            <person name="Podowski R.M."/>
            <person name="Naeslund A.K."/>
            <person name="Eriksson A.-S."/>
            <person name="Winkler H.H."/>
            <person name="Kurland C.G."/>
        </authorList>
    </citation>
    <scope>NUCLEOTIDE SEQUENCE [LARGE SCALE GENOMIC DNA]</scope>
    <source>
        <strain>Madrid E</strain>
    </source>
</reference>
<comment type="function">
    <text evidence="1">Involved in the biosynthesis of isoprenoids. Catalyzes the 1,3-allylic rearrangement of the homoallylic substrate isopentenyl (IPP) to its allylic isomer, dimethylallyl diphosphate (DMAPP).</text>
</comment>
<comment type="catalytic activity">
    <reaction evidence="1">
        <text>isopentenyl diphosphate = dimethylallyl diphosphate</text>
        <dbReference type="Rhea" id="RHEA:23284"/>
        <dbReference type="ChEBI" id="CHEBI:57623"/>
        <dbReference type="ChEBI" id="CHEBI:128769"/>
        <dbReference type="EC" id="5.3.3.2"/>
    </reaction>
</comment>
<comment type="cofactor">
    <cofactor evidence="1">
        <name>FMN</name>
        <dbReference type="ChEBI" id="CHEBI:58210"/>
    </cofactor>
</comment>
<comment type="cofactor">
    <cofactor evidence="1">
        <name>NADPH</name>
        <dbReference type="ChEBI" id="CHEBI:57783"/>
    </cofactor>
</comment>
<comment type="cofactor">
    <cofactor evidence="1">
        <name>Mg(2+)</name>
        <dbReference type="ChEBI" id="CHEBI:18420"/>
    </cofactor>
</comment>
<comment type="subunit">
    <text evidence="1">Homooctamer. Dimer of tetramers.</text>
</comment>
<comment type="subcellular location">
    <subcellularLocation>
        <location evidence="1">Cytoplasm</location>
    </subcellularLocation>
</comment>
<comment type="similarity">
    <text evidence="1">Belongs to the IPP isomerase type 2 family.</text>
</comment>
<dbReference type="EC" id="5.3.3.2" evidence="1"/>
<dbReference type="EMBL" id="AJ235271">
    <property type="protein sequence ID" value="CAA14909.1"/>
    <property type="molecule type" value="Genomic_DNA"/>
</dbReference>
<dbReference type="PIR" id="C71704">
    <property type="entry name" value="C71704"/>
</dbReference>
<dbReference type="RefSeq" id="NP_220833.1">
    <property type="nucleotide sequence ID" value="NC_000963.1"/>
</dbReference>
<dbReference type="RefSeq" id="WP_004599487.1">
    <property type="nucleotide sequence ID" value="NC_000963.1"/>
</dbReference>
<dbReference type="SMR" id="Q9ZD90"/>
<dbReference type="STRING" id="272947.gene:17555532"/>
<dbReference type="EnsemblBacteria" id="CAA14909">
    <property type="protein sequence ID" value="CAA14909"/>
    <property type="gene ID" value="CAA14909"/>
</dbReference>
<dbReference type="GeneID" id="57569577"/>
<dbReference type="KEGG" id="rpr:RP452"/>
<dbReference type="PATRIC" id="fig|272947.5.peg.465"/>
<dbReference type="eggNOG" id="COG1304">
    <property type="taxonomic scope" value="Bacteria"/>
</dbReference>
<dbReference type="HOGENOM" id="CLU_065515_1_0_5"/>
<dbReference type="OrthoDB" id="9795032at2"/>
<dbReference type="Proteomes" id="UP000002480">
    <property type="component" value="Chromosome"/>
</dbReference>
<dbReference type="GO" id="GO:0005737">
    <property type="term" value="C:cytoplasm"/>
    <property type="evidence" value="ECO:0007669"/>
    <property type="project" value="UniProtKB-SubCell"/>
</dbReference>
<dbReference type="GO" id="GO:0010181">
    <property type="term" value="F:FMN binding"/>
    <property type="evidence" value="ECO:0007669"/>
    <property type="project" value="UniProtKB-UniRule"/>
</dbReference>
<dbReference type="GO" id="GO:0004452">
    <property type="term" value="F:isopentenyl-diphosphate delta-isomerase activity"/>
    <property type="evidence" value="ECO:0007669"/>
    <property type="project" value="UniProtKB-UniRule"/>
</dbReference>
<dbReference type="GO" id="GO:0000287">
    <property type="term" value="F:magnesium ion binding"/>
    <property type="evidence" value="ECO:0007669"/>
    <property type="project" value="UniProtKB-UniRule"/>
</dbReference>
<dbReference type="GO" id="GO:0070402">
    <property type="term" value="F:NADPH binding"/>
    <property type="evidence" value="ECO:0007669"/>
    <property type="project" value="UniProtKB-UniRule"/>
</dbReference>
<dbReference type="GO" id="GO:0016491">
    <property type="term" value="F:oxidoreductase activity"/>
    <property type="evidence" value="ECO:0007669"/>
    <property type="project" value="InterPro"/>
</dbReference>
<dbReference type="GO" id="GO:0008299">
    <property type="term" value="P:isoprenoid biosynthetic process"/>
    <property type="evidence" value="ECO:0007669"/>
    <property type="project" value="UniProtKB-UniRule"/>
</dbReference>
<dbReference type="CDD" id="cd02811">
    <property type="entry name" value="IDI-2_FMN"/>
    <property type="match status" value="1"/>
</dbReference>
<dbReference type="Gene3D" id="3.20.20.70">
    <property type="entry name" value="Aldolase class I"/>
    <property type="match status" value="1"/>
</dbReference>
<dbReference type="HAMAP" id="MF_00354">
    <property type="entry name" value="Idi_2"/>
    <property type="match status" value="1"/>
</dbReference>
<dbReference type="InterPro" id="IPR013785">
    <property type="entry name" value="Aldolase_TIM"/>
</dbReference>
<dbReference type="InterPro" id="IPR000262">
    <property type="entry name" value="FMN-dep_DH"/>
</dbReference>
<dbReference type="InterPro" id="IPR011179">
    <property type="entry name" value="IPdP_isomerase"/>
</dbReference>
<dbReference type="NCBIfam" id="TIGR02151">
    <property type="entry name" value="IPP_isom_2"/>
    <property type="match status" value="1"/>
</dbReference>
<dbReference type="PANTHER" id="PTHR43665">
    <property type="entry name" value="ISOPENTENYL-DIPHOSPHATE DELTA-ISOMERASE"/>
    <property type="match status" value="1"/>
</dbReference>
<dbReference type="PANTHER" id="PTHR43665:SF1">
    <property type="entry name" value="ISOPENTENYL-DIPHOSPHATE DELTA-ISOMERASE"/>
    <property type="match status" value="1"/>
</dbReference>
<dbReference type="Pfam" id="PF01070">
    <property type="entry name" value="FMN_dh"/>
    <property type="match status" value="2"/>
</dbReference>
<dbReference type="PIRSF" id="PIRSF003314">
    <property type="entry name" value="IPP_isomerase"/>
    <property type="match status" value="1"/>
</dbReference>
<dbReference type="SUPFAM" id="SSF51395">
    <property type="entry name" value="FMN-linked oxidoreductases"/>
    <property type="match status" value="1"/>
</dbReference>
<gene>
    <name evidence="1" type="primary">fni</name>
    <name type="ordered locus">RP452</name>
</gene>
<organism>
    <name type="scientific">Rickettsia prowazekii (strain Madrid E)</name>
    <dbReference type="NCBI Taxonomy" id="272947"/>
    <lineage>
        <taxon>Bacteria</taxon>
        <taxon>Pseudomonadati</taxon>
        <taxon>Pseudomonadota</taxon>
        <taxon>Alphaproteobacteria</taxon>
        <taxon>Rickettsiales</taxon>
        <taxon>Rickettsiaceae</taxon>
        <taxon>Rickettsieae</taxon>
        <taxon>Rickettsia</taxon>
        <taxon>typhus group</taxon>
    </lineage>
</organism>
<feature type="chain" id="PRO_0000134419" description="Isopentenyl-diphosphate delta-isomerase">
    <location>
        <begin position="1"/>
        <end position="342"/>
    </location>
</feature>
<feature type="binding site" evidence="1">
    <location>
        <begin position="11"/>
        <end position="12"/>
    </location>
    <ligand>
        <name>substrate</name>
    </ligand>
</feature>
<feature type="binding site" evidence="1">
    <location>
        <position position="68"/>
    </location>
    <ligand>
        <name>FMN</name>
        <dbReference type="ChEBI" id="CHEBI:58210"/>
    </ligand>
</feature>
<feature type="binding site" evidence="1">
    <location>
        <begin position="69"/>
        <end position="71"/>
    </location>
    <ligand>
        <name>FMN</name>
        <dbReference type="ChEBI" id="CHEBI:58210"/>
    </ligand>
</feature>
<feature type="binding site" evidence="1">
    <location>
        <begin position="99"/>
        <end position="101"/>
    </location>
    <ligand>
        <name>substrate</name>
    </ligand>
</feature>
<feature type="binding site" evidence="1">
    <location>
        <position position="99"/>
    </location>
    <ligand>
        <name>FMN</name>
        <dbReference type="ChEBI" id="CHEBI:58210"/>
    </ligand>
</feature>
<feature type="binding site" evidence="1">
    <location>
        <position position="127"/>
    </location>
    <ligand>
        <name>FMN</name>
        <dbReference type="ChEBI" id="CHEBI:58210"/>
    </ligand>
</feature>
<feature type="binding site" evidence="1">
    <location>
        <position position="163"/>
    </location>
    <ligand>
        <name>Mg(2+)</name>
        <dbReference type="ChEBI" id="CHEBI:18420"/>
    </ligand>
</feature>
<feature type="binding site" evidence="1">
    <location>
        <position position="194"/>
    </location>
    <ligand>
        <name>FMN</name>
        <dbReference type="ChEBI" id="CHEBI:58210"/>
    </ligand>
</feature>
<feature type="binding site" evidence="1">
    <location>
        <position position="224"/>
    </location>
    <ligand>
        <name>FMN</name>
        <dbReference type="ChEBI" id="CHEBI:58210"/>
    </ligand>
</feature>
<feature type="binding site" evidence="1">
    <location>
        <begin position="295"/>
        <end position="296"/>
    </location>
    <ligand>
        <name>FMN</name>
        <dbReference type="ChEBI" id="CHEBI:58210"/>
    </ligand>
</feature>
<keyword id="KW-0963">Cytoplasm</keyword>
<keyword id="KW-0285">Flavoprotein</keyword>
<keyword id="KW-0288">FMN</keyword>
<keyword id="KW-0413">Isomerase</keyword>
<keyword id="KW-0414">Isoprene biosynthesis</keyword>
<keyword id="KW-0460">Magnesium</keyword>
<keyword id="KW-0479">Metal-binding</keyword>
<keyword id="KW-0521">NADP</keyword>
<keyword id="KW-1185">Reference proteome</keyword>
<evidence type="ECO:0000255" key="1">
    <source>
        <dbReference type="HAMAP-Rule" id="MF_00354"/>
    </source>
</evidence>
<protein>
    <recommendedName>
        <fullName evidence="1">Isopentenyl-diphosphate delta-isomerase</fullName>
        <shortName evidence="1">IPP isomerase</shortName>
        <ecNumber evidence="1">5.3.3.2</ecNumber>
    </recommendedName>
    <alternativeName>
        <fullName evidence="1">Isopentenyl diphosphate:dimethylallyl diphosphate isomerase</fullName>
    </alternativeName>
    <alternativeName>
        <fullName evidence="1">Isopentenyl pyrophosphate isomerase</fullName>
    </alternativeName>
    <alternativeName>
        <fullName evidence="1">Type 2 isopentenyl diphosphate isomerase</fullName>
        <shortName evidence="1">IDI-2</shortName>
    </alternativeName>
</protein>
<sequence>MPKEQNLDIERKQEHIEINLKQNVNSTLKSGLESIKFIHNALPEINYDSIDTTTTFLGKDMKAPILISSMTGGTARARDINYRLAQAAQKSGIAMGLGSMRILLTKPDTIKTFTVRHVAPDIPLLANIGAVQLNYGVTPKECQYLIDTIKADALILHLNVLHELTQPEGNKNWENLLPKIKEVINYLSVPVIVKEVGYGLSKQVAKKLIKAGVKVLDIAGSGGTSWSQVEAYRAKNSMQNRIASSFINWGITTLDSLKMLQEISKDITIIASGGLQSGIDGAKAIRMGANIFGLAGKLLKAADIAESLVLEEIQVIIEQLKITMLCTGSCTLKDLAKAEIMW</sequence>
<name>IDI2_RICPR</name>